<comment type="function">
    <text evidence="1">Matrix protein p17 targets Gag and Gag-Pol polyproteins to the plasma membrane via a multipartite membrane binding signal, that includes its myristoylated N-terminus. Also mediates nuclear localization of the preintegration complex. Implicated in the release from host cell mediated by Vpu (By similarity).</text>
</comment>
<comment type="function">
    <text evidence="1">Capsid protein p24 forms the conical core of the virus that encapsulates the genomic RNA-nucleocapsid complex.</text>
</comment>
<comment type="function">
    <text evidence="1">Nucleocapsid protein p7 encapsulates and protects viral dimeric unspliced (genomic) RNA. Binds these RNAs through its zinc fingers (By similarity).</text>
</comment>
<comment type="function">
    <text evidence="1">p6-gag plays a role in budding of the assembled particle by interacting with the host class E VPS proteins TSG101 and PDCD6IP/AIP1.</text>
</comment>
<comment type="subunit">
    <molecule>Matrix protein p17</molecule>
    <text evidence="2 4">Homotrimer. Interacts with gp41 (via C-terminus).</text>
</comment>
<comment type="subunit">
    <molecule>p6-gag</molecule>
    <text evidence="4">Interacts with host TSG101 (By similarity).</text>
</comment>
<comment type="subcellular location">
    <molecule>Matrix protein p17</molecule>
    <subcellularLocation>
        <location evidence="7">Virion</location>
    </subcellularLocation>
    <subcellularLocation>
        <location evidence="1">Host nucleus</location>
    </subcellularLocation>
    <subcellularLocation>
        <location evidence="1">Host cytoplasm</location>
    </subcellularLocation>
    <subcellularLocation>
        <location evidence="7">Host cell membrane</location>
        <topology evidence="7">Lipid-anchor</topology>
    </subcellularLocation>
    <text evidence="1">Following virus entry, the nuclear localization signal (NLS) of the matrix protein participates with Vpr to the nuclear localization of the viral genome. During virus production, the nuclear export activity of the matrix protein counteracts the NLS to maintain the Gag and Gag-Pol polyproteins in the cytoplasm, thereby directing unspliced RNA to the plasma membrane (By similarity).</text>
</comment>
<comment type="subcellular location">
    <molecule>Capsid protein p24</molecule>
    <subcellularLocation>
        <location evidence="7">Virion</location>
    </subcellularLocation>
</comment>
<comment type="subcellular location">
    <molecule>Nucleocapsid protein p7</molecule>
    <subcellularLocation>
        <location evidence="7">Virion</location>
    </subcellularLocation>
</comment>
<comment type="alternative products">
    <event type="ribosomal frameshifting"/>
    <isoform>
        <id>P17282-1</id>
        <name>Gag polyprotein</name>
        <sequence type="displayed"/>
    </isoform>
    <isoform>
        <id>P17283-1</id>
        <name>Gag-Pol polyprotein</name>
        <sequence type="external"/>
    </isoform>
    <text>Translation results in the formation of the Gag polyprotein most of the time. Ribosomal frameshifting at the gag-pol genes boundary occurs at low frequency and produces the Gag-Pol polyprotein. This strategy of translation probably allows the virus to modulate the quantity of each viral protein. Maintenance of a correct Gag to Gag-Pol ratio is essential for RNA dimerization and viral infectivity.</text>
</comment>
<comment type="domain">
    <text evidence="3">Late-budding domains (L domains) are short sequence motifs essential for viral particle budding. They recruit proteins of the host ESCRT machinery (Endosomal Sorting Complex Required for Transport) or ESCRT-associated proteins. p6-gag contains one L domain: a PTAP/PSAP motif, which interacts with the UEV domain of TSG101.</text>
</comment>
<comment type="PTM">
    <text evidence="1">Capsid protein p24 is phosphorylated.</text>
</comment>
<comment type="PTM">
    <text evidence="1">Specific enzymatic cleavages by the viral protease yield mature proteins. The polyprotein is cleaved during and after budding, this process is termed maturation (By similarity).</text>
</comment>
<comment type="miscellaneous">
    <molecule>Isoform Gag polyprotein</molecule>
    <text>Produced by conventional translation.</text>
</comment>
<comment type="similarity">
    <text evidence="7">Belongs to the primate lentivirus group gag polyprotein family.</text>
</comment>
<protein>
    <recommendedName>
        <fullName>Gag polyprotein</fullName>
    </recommendedName>
    <alternativeName>
        <fullName>Pr55Gag</fullName>
    </alternativeName>
    <component>
        <recommendedName>
            <fullName>Matrix protein p17</fullName>
            <shortName>MA</shortName>
        </recommendedName>
    </component>
    <component>
        <recommendedName>
            <fullName>Capsid protein p24</fullName>
            <shortName>CA</shortName>
        </recommendedName>
    </component>
    <component>
        <recommendedName>
            <fullName>Spacer peptide p2</fullName>
        </recommendedName>
    </component>
    <component>
        <recommendedName>
            <fullName>Nucleocapsid protein p7</fullName>
            <shortName>NC</shortName>
        </recommendedName>
    </component>
    <component>
        <recommendedName>
            <fullName>Spacer peptide p1</fullName>
        </recommendedName>
    </component>
    <component>
        <recommendedName>
            <fullName>p6-gag</fullName>
        </recommendedName>
    </component>
</protein>
<organism>
    <name type="scientific">Simian immunodeficiency virus (isolate CPZ GAB1)</name>
    <name type="common">SIV-cpz</name>
    <name type="synonym">Chimpanzee immunodeficiency virus</name>
    <dbReference type="NCBI Taxonomy" id="402771"/>
    <lineage>
        <taxon>Viruses</taxon>
        <taxon>Riboviria</taxon>
        <taxon>Pararnavirae</taxon>
        <taxon>Artverviricota</taxon>
        <taxon>Revtraviricetes</taxon>
        <taxon>Ortervirales</taxon>
        <taxon>Retroviridae</taxon>
        <taxon>Orthoretrovirinae</taxon>
        <taxon>Lentivirus</taxon>
        <taxon>Simian immunodeficiency virus</taxon>
    </lineage>
</organism>
<accession>P17282</accession>
<reference key="1">
    <citation type="journal article" date="1990" name="Nature">
        <title>Genetic organization of a chimpanzee lentivirus related to HIV-1.</title>
        <authorList>
            <person name="Huet T."/>
            <person name="Cheynier R."/>
            <person name="Meyerhans A."/>
            <person name="Roelants G."/>
            <person name="Wain-Hobson S."/>
        </authorList>
    </citation>
    <scope>NUCLEOTIDE SEQUENCE [GENOMIC RNA]</scope>
</reference>
<gene>
    <name type="primary">gag</name>
</gene>
<keyword id="KW-0167">Capsid protein</keyword>
<keyword id="KW-1032">Host cell membrane</keyword>
<keyword id="KW-1035">Host cytoplasm</keyword>
<keyword id="KW-1043">Host membrane</keyword>
<keyword id="KW-1048">Host nucleus</keyword>
<keyword id="KW-0945">Host-virus interaction</keyword>
<keyword id="KW-0449">Lipoprotein</keyword>
<keyword id="KW-0472">Membrane</keyword>
<keyword id="KW-0479">Metal-binding</keyword>
<keyword id="KW-0519">Myristate</keyword>
<keyword id="KW-0597">Phosphoprotein</keyword>
<keyword id="KW-1185">Reference proteome</keyword>
<keyword id="KW-0677">Repeat</keyword>
<keyword id="KW-0688">Ribosomal frameshifting</keyword>
<keyword id="KW-0694">RNA-binding</keyword>
<keyword id="KW-1198">Viral budding</keyword>
<keyword id="KW-1187">Viral budding via the host ESCRT complexes</keyword>
<keyword id="KW-0543">Viral nucleoprotein</keyword>
<keyword id="KW-1188">Viral release from host cell</keyword>
<keyword id="KW-0946">Virion</keyword>
<keyword id="KW-0862">Zinc</keyword>
<keyword id="KW-0863">Zinc-finger</keyword>
<organismHost>
    <name type="scientific">Pan</name>
    <name type="common">chimpanzees</name>
    <dbReference type="NCBI Taxonomy" id="9596"/>
</organismHost>
<name>GAG_SIVCZ</name>
<proteinExistence type="inferred from homology"/>
<sequence>MGARASVLTGGKLDRWEKVRLRPGGRKRYMMKHLVWASRELERFACDPGLMESKEGCTKLLQQLEPALKTGSEGLRSLFNTLAVLWCIHSDITVEDTQKALEQLKRHHGEQQSKTESNSGSREGGASQGASASAGISGNYPLVQNAQGQMVHQAISPRTLNAWVKVVEEKAFSPEVIPMFSALSEGALPQDVNTMLNAVGGHQGAMQVLKEVINEEAAEWDRLHPTHAGPIAPGQLREPRGSDIAGTTSTLQEQIGWTTANPPIPVGDVYRRWVILGLNKVVRMYCPVSILDIRQGPKEPFRDYVDRFYKTLRAEQASQEVKNWMTDTLLVQNANPDCKQILKALGPGATLEEMMTACQGVGGPSHKARVLAEAMSMVQNQGRADVFFQKGQGAGPKRKIKCFNCGKEGHLARNCKAPRRKGCWRCGQEGHQMKDCTGRQVNFLGKGWPSRSGRPGNFVQNRTEPTAPPIESYGYQEEEKSQEKKEGESSLYPPTSLKSLFGSDPSSQ</sequence>
<dbReference type="EMBL" id="X52154">
    <property type="protein sequence ID" value="CAA36401.1"/>
    <property type="molecule type" value="Genomic_RNA"/>
</dbReference>
<dbReference type="PIR" id="S09983">
    <property type="entry name" value="FOLJSI"/>
</dbReference>
<dbReference type="SMR" id="P17282"/>
<dbReference type="ELM" id="P17282"/>
<dbReference type="PRO" id="PR:P17282"/>
<dbReference type="Proteomes" id="UP000009153">
    <property type="component" value="Segment"/>
</dbReference>
<dbReference type="GO" id="GO:0030430">
    <property type="term" value="C:host cell cytoplasm"/>
    <property type="evidence" value="ECO:0007669"/>
    <property type="project" value="UniProtKB-SubCell"/>
</dbReference>
<dbReference type="GO" id="GO:0042025">
    <property type="term" value="C:host cell nucleus"/>
    <property type="evidence" value="ECO:0007669"/>
    <property type="project" value="UniProtKB-SubCell"/>
</dbReference>
<dbReference type="GO" id="GO:0020002">
    <property type="term" value="C:host cell plasma membrane"/>
    <property type="evidence" value="ECO:0007669"/>
    <property type="project" value="UniProtKB-SubCell"/>
</dbReference>
<dbReference type="GO" id="GO:0016020">
    <property type="term" value="C:membrane"/>
    <property type="evidence" value="ECO:0007669"/>
    <property type="project" value="UniProtKB-KW"/>
</dbReference>
<dbReference type="GO" id="GO:0019013">
    <property type="term" value="C:viral nucleocapsid"/>
    <property type="evidence" value="ECO:0007669"/>
    <property type="project" value="UniProtKB-KW"/>
</dbReference>
<dbReference type="GO" id="GO:0003723">
    <property type="term" value="F:RNA binding"/>
    <property type="evidence" value="ECO:0007669"/>
    <property type="project" value="UniProtKB-KW"/>
</dbReference>
<dbReference type="GO" id="GO:0005198">
    <property type="term" value="F:structural molecule activity"/>
    <property type="evidence" value="ECO:0007669"/>
    <property type="project" value="InterPro"/>
</dbReference>
<dbReference type="GO" id="GO:0008270">
    <property type="term" value="F:zinc ion binding"/>
    <property type="evidence" value="ECO:0007669"/>
    <property type="project" value="UniProtKB-KW"/>
</dbReference>
<dbReference type="GO" id="GO:0039702">
    <property type="term" value="P:viral budding via host ESCRT complex"/>
    <property type="evidence" value="ECO:0007669"/>
    <property type="project" value="UniProtKB-KW"/>
</dbReference>
<dbReference type="GO" id="GO:0075523">
    <property type="term" value="P:viral translational frameshifting"/>
    <property type="evidence" value="ECO:0007669"/>
    <property type="project" value="UniProtKB-KW"/>
</dbReference>
<dbReference type="FunFam" id="1.10.1200.30:FF:000001">
    <property type="entry name" value="Gag polyprotein"/>
    <property type="match status" value="1"/>
</dbReference>
<dbReference type="Gene3D" id="1.10.1200.30">
    <property type="match status" value="1"/>
</dbReference>
<dbReference type="Gene3D" id="6.10.250.390">
    <property type="match status" value="1"/>
</dbReference>
<dbReference type="Gene3D" id="1.10.375.10">
    <property type="entry name" value="Human Immunodeficiency Virus Type 1 Capsid Protein"/>
    <property type="match status" value="1"/>
</dbReference>
<dbReference type="Gene3D" id="1.10.150.90">
    <property type="entry name" value="Immunodeficiency lentiviruses, gag gene matrix protein p17"/>
    <property type="match status" value="1"/>
</dbReference>
<dbReference type="Gene3D" id="1.20.5.760">
    <property type="entry name" value="Single helix bin"/>
    <property type="match status" value="1"/>
</dbReference>
<dbReference type="Gene3D" id="4.10.60.10">
    <property type="entry name" value="Zinc finger, CCHC-type"/>
    <property type="match status" value="1"/>
</dbReference>
<dbReference type="InterPro" id="IPR045345">
    <property type="entry name" value="Gag_p24_C"/>
</dbReference>
<dbReference type="InterPro" id="IPR014817">
    <property type="entry name" value="Gag_p6"/>
</dbReference>
<dbReference type="InterPro" id="IPR000071">
    <property type="entry name" value="Lentvrl_matrix_N"/>
</dbReference>
<dbReference type="InterPro" id="IPR012344">
    <property type="entry name" value="Matrix_HIV/RSV_N"/>
</dbReference>
<dbReference type="InterPro" id="IPR050195">
    <property type="entry name" value="Primate_lentivir_Gag_pol-like"/>
</dbReference>
<dbReference type="InterPro" id="IPR008916">
    <property type="entry name" value="Retrov_capsid_C"/>
</dbReference>
<dbReference type="InterPro" id="IPR008919">
    <property type="entry name" value="Retrov_capsid_N"/>
</dbReference>
<dbReference type="InterPro" id="IPR010999">
    <property type="entry name" value="Retrovr_matrix"/>
</dbReference>
<dbReference type="InterPro" id="IPR001878">
    <property type="entry name" value="Znf_CCHC"/>
</dbReference>
<dbReference type="InterPro" id="IPR036875">
    <property type="entry name" value="Znf_CCHC_sf"/>
</dbReference>
<dbReference type="PANTHER" id="PTHR40389:SF4">
    <property type="match status" value="1"/>
</dbReference>
<dbReference type="PANTHER" id="PTHR40389">
    <property type="entry name" value="ENDOGENOUS RETROVIRUS GROUP K MEMBER 24 GAG POLYPROTEIN-RELATED"/>
    <property type="match status" value="1"/>
</dbReference>
<dbReference type="Pfam" id="PF00540">
    <property type="entry name" value="Gag_p17"/>
    <property type="match status" value="1"/>
</dbReference>
<dbReference type="Pfam" id="PF00607">
    <property type="entry name" value="Gag_p24"/>
    <property type="match status" value="1"/>
</dbReference>
<dbReference type="Pfam" id="PF19317">
    <property type="entry name" value="Gag_p24_C"/>
    <property type="match status" value="1"/>
</dbReference>
<dbReference type="Pfam" id="PF08705">
    <property type="entry name" value="Gag_p6"/>
    <property type="match status" value="1"/>
</dbReference>
<dbReference type="Pfam" id="PF00098">
    <property type="entry name" value="zf-CCHC"/>
    <property type="match status" value="2"/>
</dbReference>
<dbReference type="PRINTS" id="PR00234">
    <property type="entry name" value="HIV1MATRIX"/>
</dbReference>
<dbReference type="SMART" id="SM00343">
    <property type="entry name" value="ZnF_C2HC"/>
    <property type="match status" value="2"/>
</dbReference>
<dbReference type="SUPFAM" id="SSF47836">
    <property type="entry name" value="Retroviral matrix proteins"/>
    <property type="match status" value="1"/>
</dbReference>
<dbReference type="SUPFAM" id="SSF47353">
    <property type="entry name" value="Retrovirus capsid dimerization domain-like"/>
    <property type="match status" value="1"/>
</dbReference>
<dbReference type="SUPFAM" id="SSF47943">
    <property type="entry name" value="Retrovirus capsid protein, N-terminal core domain"/>
    <property type="match status" value="1"/>
</dbReference>
<dbReference type="SUPFAM" id="SSF57756">
    <property type="entry name" value="Retrovirus zinc finger-like domains"/>
    <property type="match status" value="1"/>
</dbReference>
<dbReference type="PROSITE" id="PS50158">
    <property type="entry name" value="ZF_CCHC"/>
    <property type="match status" value="2"/>
</dbReference>
<evidence type="ECO:0000250" key="1"/>
<evidence type="ECO:0000250" key="2">
    <source>
        <dbReference type="UniProtKB" id="P04591"/>
    </source>
</evidence>
<evidence type="ECO:0000250" key="3">
    <source>
        <dbReference type="UniProtKB" id="P05893"/>
    </source>
</evidence>
<evidence type="ECO:0000250" key="4">
    <source>
        <dbReference type="UniProtKB" id="P12493"/>
    </source>
</evidence>
<evidence type="ECO:0000255" key="5">
    <source>
        <dbReference type="PROSITE-ProRule" id="PRU00047"/>
    </source>
</evidence>
<evidence type="ECO:0000256" key="6">
    <source>
        <dbReference type="SAM" id="MobiDB-lite"/>
    </source>
</evidence>
<evidence type="ECO:0000305" key="7"/>
<feature type="initiator methionine" description="Removed; by host" evidence="1">
    <location>
        <position position="1"/>
    </location>
</feature>
<feature type="chain" id="PRO_0000316150" description="Gag polyprotein" evidence="1">
    <location>
        <begin position="2"/>
        <end position="508"/>
    </location>
</feature>
<feature type="chain" id="PRO_0000038644" description="Matrix protein p17" evidence="1">
    <location>
        <begin position="2"/>
        <end position="140"/>
    </location>
</feature>
<feature type="chain" id="PRO_0000038645" description="Capsid protein p24" evidence="1">
    <location>
        <begin position="141"/>
        <end position="371"/>
    </location>
</feature>
<feature type="peptide" id="PRO_0000316151" description="Spacer peptide p2" evidence="1">
    <location>
        <begin position="372"/>
        <end position="387"/>
    </location>
</feature>
<feature type="chain" id="PRO_0000038646" description="Nucleocapsid protein p7" evidence="1">
    <location>
        <begin position="388"/>
        <end position="442"/>
    </location>
</feature>
<feature type="peptide" id="PRO_0000316152" description="Spacer peptide p1" evidence="1">
    <location>
        <begin position="443"/>
        <end position="458"/>
    </location>
</feature>
<feature type="chain" id="PRO_0000316153" description="p6-gag" evidence="1">
    <location>
        <begin position="459"/>
        <end position="508"/>
    </location>
</feature>
<feature type="zinc finger region" description="CCHC-type 1" evidence="5">
    <location>
        <begin position="400"/>
        <end position="417"/>
    </location>
</feature>
<feature type="zinc finger region" description="CCHC-type 2" evidence="5">
    <location>
        <begin position="421"/>
        <end position="438"/>
    </location>
</feature>
<feature type="region of interest" description="Disordered" evidence="6">
    <location>
        <begin position="104"/>
        <end position="133"/>
    </location>
</feature>
<feature type="region of interest" description="Disordered" evidence="6">
    <location>
        <begin position="446"/>
        <end position="508"/>
    </location>
</feature>
<feature type="short sequence motif" description="Nuclear export signal" evidence="1">
    <location>
        <begin position="16"/>
        <end position="22"/>
    </location>
</feature>
<feature type="short sequence motif" description="Nuclear localization signal" evidence="1">
    <location>
        <begin position="26"/>
        <end position="32"/>
    </location>
</feature>
<feature type="short sequence motif" description="PTAP/PSAP motif" evidence="3">
    <location>
        <begin position="465"/>
        <end position="468"/>
    </location>
</feature>
<feature type="short sequence motif" description="LYPX(n)L motif">
    <location>
        <begin position="491"/>
        <end position="500"/>
    </location>
</feature>
<feature type="compositionally biased region" description="Basic and acidic residues" evidence="6">
    <location>
        <begin position="104"/>
        <end position="113"/>
    </location>
</feature>
<feature type="compositionally biased region" description="Basic and acidic residues" evidence="6">
    <location>
        <begin position="477"/>
        <end position="488"/>
    </location>
</feature>
<feature type="compositionally biased region" description="Polar residues" evidence="6">
    <location>
        <begin position="492"/>
        <end position="508"/>
    </location>
</feature>
<feature type="site" description="Cleavage; by viral protease" evidence="1">
    <location>
        <begin position="140"/>
        <end position="141"/>
    </location>
</feature>
<feature type="site" description="Cleavage; by viral protease" evidence="1">
    <location>
        <begin position="371"/>
        <end position="372"/>
    </location>
</feature>
<feature type="site" description="Cleavage; by viral protease" evidence="1">
    <location>
        <begin position="387"/>
        <end position="388"/>
    </location>
</feature>
<feature type="site" description="Cleavage; by viral protease" evidence="1">
    <location>
        <begin position="442"/>
        <end position="443"/>
    </location>
</feature>
<feature type="site" description="Cleavage; by viral protease" evidence="1">
    <location>
        <begin position="458"/>
        <end position="459"/>
    </location>
</feature>
<feature type="lipid moiety-binding region" description="N-myristoyl glycine; by host" evidence="1">
    <location>
        <position position="2"/>
    </location>
</feature>